<accession>Q8D2U1</accession>
<reference key="1">
    <citation type="journal article" date="2002" name="Nat. Genet.">
        <title>Genome sequence of the endocellular obligate symbiont of tsetse flies, Wigglesworthia glossinidia.</title>
        <authorList>
            <person name="Akman L."/>
            <person name="Yamashita A."/>
            <person name="Watanabe H."/>
            <person name="Oshima K."/>
            <person name="Shiba T."/>
            <person name="Hattori M."/>
            <person name="Aksoy S."/>
        </authorList>
    </citation>
    <scope>NUCLEOTIDE SEQUENCE [LARGE SCALE GENOMIC DNA]</scope>
</reference>
<dbReference type="EC" id="6.1.1.22" evidence="1"/>
<dbReference type="EMBL" id="BA000021">
    <property type="protein sequence ID" value="BAC24409.1"/>
    <property type="molecule type" value="Genomic_DNA"/>
</dbReference>
<dbReference type="SMR" id="Q8D2U1"/>
<dbReference type="STRING" id="36870.gene:10368756"/>
<dbReference type="KEGG" id="wbr:asnS"/>
<dbReference type="eggNOG" id="COG0017">
    <property type="taxonomic scope" value="Bacteria"/>
</dbReference>
<dbReference type="HOGENOM" id="CLU_004553_2_0_6"/>
<dbReference type="OrthoDB" id="9762036at2"/>
<dbReference type="Proteomes" id="UP000000562">
    <property type="component" value="Chromosome"/>
</dbReference>
<dbReference type="GO" id="GO:0005737">
    <property type="term" value="C:cytoplasm"/>
    <property type="evidence" value="ECO:0007669"/>
    <property type="project" value="UniProtKB-SubCell"/>
</dbReference>
<dbReference type="GO" id="GO:0004816">
    <property type="term" value="F:asparagine-tRNA ligase activity"/>
    <property type="evidence" value="ECO:0007669"/>
    <property type="project" value="UniProtKB-UniRule"/>
</dbReference>
<dbReference type="GO" id="GO:0005524">
    <property type="term" value="F:ATP binding"/>
    <property type="evidence" value="ECO:0007669"/>
    <property type="project" value="UniProtKB-UniRule"/>
</dbReference>
<dbReference type="GO" id="GO:0003676">
    <property type="term" value="F:nucleic acid binding"/>
    <property type="evidence" value="ECO:0007669"/>
    <property type="project" value="InterPro"/>
</dbReference>
<dbReference type="GO" id="GO:0006421">
    <property type="term" value="P:asparaginyl-tRNA aminoacylation"/>
    <property type="evidence" value="ECO:0007669"/>
    <property type="project" value="UniProtKB-UniRule"/>
</dbReference>
<dbReference type="CDD" id="cd00776">
    <property type="entry name" value="AsxRS_core"/>
    <property type="match status" value="1"/>
</dbReference>
<dbReference type="CDD" id="cd04318">
    <property type="entry name" value="EcAsnRS_like_N"/>
    <property type="match status" value="1"/>
</dbReference>
<dbReference type="FunFam" id="3.30.930.10:FF:000016">
    <property type="entry name" value="Asparagine--tRNA ligase"/>
    <property type="match status" value="1"/>
</dbReference>
<dbReference type="Gene3D" id="3.30.930.10">
    <property type="entry name" value="Bira Bifunctional Protein, Domain 2"/>
    <property type="match status" value="1"/>
</dbReference>
<dbReference type="Gene3D" id="2.40.50.140">
    <property type="entry name" value="Nucleic acid-binding proteins"/>
    <property type="match status" value="1"/>
</dbReference>
<dbReference type="HAMAP" id="MF_00534">
    <property type="entry name" value="Asn_tRNA_synth"/>
    <property type="match status" value="1"/>
</dbReference>
<dbReference type="InterPro" id="IPR004364">
    <property type="entry name" value="Aa-tRNA-synt_II"/>
</dbReference>
<dbReference type="InterPro" id="IPR006195">
    <property type="entry name" value="aa-tRNA-synth_II"/>
</dbReference>
<dbReference type="InterPro" id="IPR045864">
    <property type="entry name" value="aa-tRNA-synth_II/BPL/LPL"/>
</dbReference>
<dbReference type="InterPro" id="IPR004522">
    <property type="entry name" value="Asn-tRNA-ligase"/>
</dbReference>
<dbReference type="InterPro" id="IPR002312">
    <property type="entry name" value="Asp/Asn-tRNA-synth_IIb"/>
</dbReference>
<dbReference type="InterPro" id="IPR012340">
    <property type="entry name" value="NA-bd_OB-fold"/>
</dbReference>
<dbReference type="InterPro" id="IPR004365">
    <property type="entry name" value="NA-bd_OB_tRNA"/>
</dbReference>
<dbReference type="NCBIfam" id="TIGR00457">
    <property type="entry name" value="asnS"/>
    <property type="match status" value="1"/>
</dbReference>
<dbReference type="NCBIfam" id="NF003037">
    <property type="entry name" value="PRK03932.1"/>
    <property type="match status" value="1"/>
</dbReference>
<dbReference type="PANTHER" id="PTHR22594:SF34">
    <property type="entry name" value="ASPARAGINE--TRNA LIGASE, MITOCHONDRIAL-RELATED"/>
    <property type="match status" value="1"/>
</dbReference>
<dbReference type="PANTHER" id="PTHR22594">
    <property type="entry name" value="ASPARTYL/LYSYL-TRNA SYNTHETASE"/>
    <property type="match status" value="1"/>
</dbReference>
<dbReference type="Pfam" id="PF00152">
    <property type="entry name" value="tRNA-synt_2"/>
    <property type="match status" value="1"/>
</dbReference>
<dbReference type="Pfam" id="PF01336">
    <property type="entry name" value="tRNA_anti-codon"/>
    <property type="match status" value="1"/>
</dbReference>
<dbReference type="PRINTS" id="PR01042">
    <property type="entry name" value="TRNASYNTHASP"/>
</dbReference>
<dbReference type="SUPFAM" id="SSF55681">
    <property type="entry name" value="Class II aaRS and biotin synthetases"/>
    <property type="match status" value="1"/>
</dbReference>
<dbReference type="SUPFAM" id="SSF50249">
    <property type="entry name" value="Nucleic acid-binding proteins"/>
    <property type="match status" value="1"/>
</dbReference>
<dbReference type="PROSITE" id="PS50862">
    <property type="entry name" value="AA_TRNA_LIGASE_II"/>
    <property type="match status" value="1"/>
</dbReference>
<comment type="catalytic activity">
    <reaction evidence="1">
        <text>tRNA(Asn) + L-asparagine + ATP = L-asparaginyl-tRNA(Asn) + AMP + diphosphate + H(+)</text>
        <dbReference type="Rhea" id="RHEA:11180"/>
        <dbReference type="Rhea" id="RHEA-COMP:9659"/>
        <dbReference type="Rhea" id="RHEA-COMP:9674"/>
        <dbReference type="ChEBI" id="CHEBI:15378"/>
        <dbReference type="ChEBI" id="CHEBI:30616"/>
        <dbReference type="ChEBI" id="CHEBI:33019"/>
        <dbReference type="ChEBI" id="CHEBI:58048"/>
        <dbReference type="ChEBI" id="CHEBI:78442"/>
        <dbReference type="ChEBI" id="CHEBI:78515"/>
        <dbReference type="ChEBI" id="CHEBI:456215"/>
        <dbReference type="EC" id="6.1.1.22"/>
    </reaction>
</comment>
<comment type="subunit">
    <text evidence="1">Homodimer.</text>
</comment>
<comment type="subcellular location">
    <subcellularLocation>
        <location evidence="1">Cytoplasm</location>
    </subcellularLocation>
</comment>
<comment type="similarity">
    <text evidence="1">Belongs to the class-II aminoacyl-tRNA synthetase family.</text>
</comment>
<organism>
    <name type="scientific">Wigglesworthia glossinidia brevipalpis</name>
    <dbReference type="NCBI Taxonomy" id="36870"/>
    <lineage>
        <taxon>Bacteria</taxon>
        <taxon>Pseudomonadati</taxon>
        <taxon>Pseudomonadota</taxon>
        <taxon>Gammaproteobacteria</taxon>
        <taxon>Enterobacterales</taxon>
        <taxon>Erwiniaceae</taxon>
        <taxon>Wigglesworthia</taxon>
    </lineage>
</organism>
<evidence type="ECO:0000255" key="1">
    <source>
        <dbReference type="HAMAP-Rule" id="MF_00534"/>
    </source>
</evidence>
<keyword id="KW-0030">Aminoacyl-tRNA synthetase</keyword>
<keyword id="KW-0067">ATP-binding</keyword>
<keyword id="KW-0963">Cytoplasm</keyword>
<keyword id="KW-0436">Ligase</keyword>
<keyword id="KW-0547">Nucleotide-binding</keyword>
<keyword id="KW-0648">Protein biosynthesis</keyword>
<keyword id="KW-1185">Reference proteome</keyword>
<protein>
    <recommendedName>
        <fullName evidence="1">Asparagine--tRNA ligase</fullName>
        <ecNumber evidence="1">6.1.1.22</ecNumber>
    </recommendedName>
    <alternativeName>
        <fullName evidence="1">Asparaginyl-tRNA synthetase</fullName>
        <shortName evidence="1">AsnRS</shortName>
    </alternativeName>
</protein>
<sequence length="466" mass="54137">MKSVSIIDIIEKKIFKKKLVEINGWVRTKRNSKLGISFVDVYDGSCLQHIQVIAKKDLSNYKSDILRLTSGCSVKIFGVLKKSLKNSKIYELHATCIKVLGWIKDPGKYPISSKPHTLEYLRSFSHLRPRTNIIGSVSRIRNIIFQEVHNFLNKKGFIWVPSPIITSLNTEGSGEMFKVSTFDFKKIPLNKNKLINYRKDFFGKRTFLTVSGQLHIESYACSLSKVYTFGPTFRAENSNTSRHLAEFWMVEIEIAFAKLNDIILLAYNLLSNIFKKVLNKCLNDLIFLEKKLNINIIKKLKNFIEKKLIEVEYCEAIRILKNCEKNFRIQLKWGMDLSSEHERYLSDLYYKSHIVIKNYPKEIKAFYMRLNKDKKTVAAADILLPGIGEIIGGSEREDRLEYLDSMIKEKRLIHKNYEWYRDLRKYGTVPHSGFGLGIERLISYVTGLKNIRDVIPFPRSSKNASF</sequence>
<gene>
    <name evidence="1" type="primary">asnS</name>
    <name type="ordered locus">WIGBR2630</name>
</gene>
<name>SYN_WIGBR</name>
<feature type="chain" id="PRO_0000176478" description="Asparagine--tRNA ligase">
    <location>
        <begin position="1"/>
        <end position="466"/>
    </location>
</feature>
<proteinExistence type="inferred from homology"/>